<reference key="1">
    <citation type="journal article" date="2006" name="J. Bacteriol.">
        <title>The Methanosarcina barkeri genome: comparative analysis with Methanosarcina acetivorans and Methanosarcina mazei reveals extensive rearrangement within methanosarcinal genomes.</title>
        <authorList>
            <person name="Maeder D.L."/>
            <person name="Anderson I."/>
            <person name="Brettin T.S."/>
            <person name="Bruce D.C."/>
            <person name="Gilna P."/>
            <person name="Han C.S."/>
            <person name="Lapidus A."/>
            <person name="Metcalf W.W."/>
            <person name="Saunders E."/>
            <person name="Tapia R."/>
            <person name="Sowers K.R."/>
        </authorList>
    </citation>
    <scope>NUCLEOTIDE SEQUENCE [LARGE SCALE GENOMIC DNA]</scope>
    <source>
        <strain>Fusaro / DSM 804</strain>
    </source>
</reference>
<feature type="chain" id="PRO_0000258247" description="Large ribosomal subunit protein uL11">
    <location>
        <begin position="1"/>
        <end position="161"/>
    </location>
</feature>
<evidence type="ECO:0000255" key="1">
    <source>
        <dbReference type="HAMAP-Rule" id="MF_00736"/>
    </source>
</evidence>
<evidence type="ECO:0000305" key="2"/>
<proteinExistence type="inferred from homology"/>
<accession>Q46EU7</accession>
<dbReference type="EMBL" id="CP000099">
    <property type="protein sequence ID" value="AAZ69595.1"/>
    <property type="molecule type" value="Genomic_DNA"/>
</dbReference>
<dbReference type="SMR" id="Q46EU7"/>
<dbReference type="STRING" id="269797.Mbar_A0615"/>
<dbReference type="PaxDb" id="269797-Mbar_A0615"/>
<dbReference type="KEGG" id="mba:Mbar_A0615"/>
<dbReference type="eggNOG" id="arCOG04372">
    <property type="taxonomic scope" value="Archaea"/>
</dbReference>
<dbReference type="HOGENOM" id="CLU_074237_4_0_2"/>
<dbReference type="OrthoDB" id="8842at2157"/>
<dbReference type="GO" id="GO:0015934">
    <property type="term" value="C:large ribosomal subunit"/>
    <property type="evidence" value="ECO:0007669"/>
    <property type="project" value="TreeGrafter"/>
</dbReference>
<dbReference type="GO" id="GO:0070180">
    <property type="term" value="F:large ribosomal subunit rRNA binding"/>
    <property type="evidence" value="ECO:0007669"/>
    <property type="project" value="UniProtKB-UniRule"/>
</dbReference>
<dbReference type="GO" id="GO:0003735">
    <property type="term" value="F:structural constituent of ribosome"/>
    <property type="evidence" value="ECO:0007669"/>
    <property type="project" value="InterPro"/>
</dbReference>
<dbReference type="GO" id="GO:0006412">
    <property type="term" value="P:translation"/>
    <property type="evidence" value="ECO:0007669"/>
    <property type="project" value="UniProtKB-UniRule"/>
</dbReference>
<dbReference type="CDD" id="cd00349">
    <property type="entry name" value="Ribosomal_L11"/>
    <property type="match status" value="1"/>
</dbReference>
<dbReference type="FunFam" id="1.10.10.250:FF:000006">
    <property type="entry name" value="50S ribosomal protein L11"/>
    <property type="match status" value="1"/>
</dbReference>
<dbReference type="FunFam" id="3.30.1550.10:FF:000007">
    <property type="entry name" value="50S ribosomal protein L11"/>
    <property type="match status" value="1"/>
</dbReference>
<dbReference type="Gene3D" id="1.10.10.250">
    <property type="entry name" value="Ribosomal protein L11, C-terminal domain"/>
    <property type="match status" value="1"/>
</dbReference>
<dbReference type="Gene3D" id="3.30.1550.10">
    <property type="entry name" value="Ribosomal protein L11/L12, N-terminal domain"/>
    <property type="match status" value="1"/>
</dbReference>
<dbReference type="HAMAP" id="MF_00736">
    <property type="entry name" value="Ribosomal_uL11"/>
    <property type="match status" value="1"/>
</dbReference>
<dbReference type="InterPro" id="IPR000911">
    <property type="entry name" value="Ribosomal_uL11"/>
</dbReference>
<dbReference type="InterPro" id="IPR020783">
    <property type="entry name" value="Ribosomal_uL11_C"/>
</dbReference>
<dbReference type="InterPro" id="IPR036769">
    <property type="entry name" value="Ribosomal_uL11_C_sf"/>
</dbReference>
<dbReference type="InterPro" id="IPR020784">
    <property type="entry name" value="Ribosomal_uL11_N"/>
</dbReference>
<dbReference type="InterPro" id="IPR036796">
    <property type="entry name" value="Ribosomal_uL11_N_sf"/>
</dbReference>
<dbReference type="NCBIfam" id="NF002232">
    <property type="entry name" value="PRK01143.1"/>
    <property type="match status" value="1"/>
</dbReference>
<dbReference type="PANTHER" id="PTHR11661">
    <property type="entry name" value="60S RIBOSOMAL PROTEIN L12"/>
    <property type="match status" value="1"/>
</dbReference>
<dbReference type="PANTHER" id="PTHR11661:SF1">
    <property type="entry name" value="LARGE RIBOSOMAL SUBUNIT PROTEIN UL11M"/>
    <property type="match status" value="1"/>
</dbReference>
<dbReference type="Pfam" id="PF00298">
    <property type="entry name" value="Ribosomal_L11"/>
    <property type="match status" value="1"/>
</dbReference>
<dbReference type="Pfam" id="PF03946">
    <property type="entry name" value="Ribosomal_L11_N"/>
    <property type="match status" value="1"/>
</dbReference>
<dbReference type="SMART" id="SM00649">
    <property type="entry name" value="RL11"/>
    <property type="match status" value="1"/>
</dbReference>
<dbReference type="SUPFAM" id="SSF54747">
    <property type="entry name" value="Ribosomal L11/L12e N-terminal domain"/>
    <property type="match status" value="1"/>
</dbReference>
<dbReference type="SUPFAM" id="SSF46906">
    <property type="entry name" value="Ribosomal protein L11, C-terminal domain"/>
    <property type="match status" value="1"/>
</dbReference>
<keyword id="KW-0687">Ribonucleoprotein</keyword>
<keyword id="KW-0689">Ribosomal protein</keyword>
<keyword id="KW-0694">RNA-binding</keyword>
<keyword id="KW-0699">rRNA-binding</keyword>
<name>RL11_METBF</name>
<gene>
    <name evidence="1" type="primary">rpl11</name>
    <name type="ordered locus">Mbar_A0615</name>
</gene>
<comment type="function">
    <text evidence="1">Forms part of the ribosomal stalk which helps the ribosome interact with GTP-bound translation factors.</text>
</comment>
<comment type="subunit">
    <text evidence="1">Part of the ribosomal stalk of the 50S ribosomal subunit. Interacts with L10 and the large rRNA to form the base of the stalk. L10 forms an elongated spine to which L12 dimers bind in a sequential fashion forming a multimeric L10(L12)X complex.</text>
</comment>
<comment type="similarity">
    <text evidence="1">Belongs to the universal ribosomal protein uL11 family.</text>
</comment>
<sequence length="161" mass="17045">MTSIVEALVPGGKANPGPPLGPALGPLGVNIKEVVEKINEKTRDYNGMQVPVKVIVDDKKNVEIEVGTPPTASLIMKELGIQKGSGNAGSEVVGNISISQVAKIARMKKEDVLSYDLKATMKEVMGTCVPMGVTVEGVEARDSQKALDQGKFDDLLAGEEW</sequence>
<protein>
    <recommendedName>
        <fullName evidence="1">Large ribosomal subunit protein uL11</fullName>
    </recommendedName>
    <alternativeName>
        <fullName evidence="2">50S ribosomal protein L11</fullName>
    </alternativeName>
</protein>
<organism>
    <name type="scientific">Methanosarcina barkeri (strain Fusaro / DSM 804)</name>
    <dbReference type="NCBI Taxonomy" id="269797"/>
    <lineage>
        <taxon>Archaea</taxon>
        <taxon>Methanobacteriati</taxon>
        <taxon>Methanobacteriota</taxon>
        <taxon>Stenosarchaea group</taxon>
        <taxon>Methanomicrobia</taxon>
        <taxon>Methanosarcinales</taxon>
        <taxon>Methanosarcinaceae</taxon>
        <taxon>Methanosarcina</taxon>
    </lineage>
</organism>